<keyword id="KW-0067">ATP-binding</keyword>
<keyword id="KW-0173">Coenzyme A biosynthesis</keyword>
<keyword id="KW-0963">Cytoplasm</keyword>
<keyword id="KW-0460">Magnesium</keyword>
<keyword id="KW-0547">Nucleotide-binding</keyword>
<keyword id="KW-0548">Nucleotidyltransferase</keyword>
<keyword id="KW-0808">Transferase</keyword>
<evidence type="ECO:0000255" key="1">
    <source>
        <dbReference type="HAMAP-Rule" id="MF_00151"/>
    </source>
</evidence>
<name>COAD_HISS2</name>
<organism>
    <name type="scientific">Histophilus somni (strain 2336)</name>
    <name type="common">Haemophilus somnus</name>
    <dbReference type="NCBI Taxonomy" id="228400"/>
    <lineage>
        <taxon>Bacteria</taxon>
        <taxon>Pseudomonadati</taxon>
        <taxon>Pseudomonadota</taxon>
        <taxon>Gammaproteobacteria</taxon>
        <taxon>Pasteurellales</taxon>
        <taxon>Pasteurellaceae</taxon>
        <taxon>Histophilus</taxon>
    </lineage>
</organism>
<reference key="1">
    <citation type="submission" date="2008-02" db="EMBL/GenBank/DDBJ databases">
        <title>Complete sequence of Haemophilus somnus 2336.</title>
        <authorList>
            <consortium name="US DOE Joint Genome Institute"/>
            <person name="Siddaramappa S."/>
            <person name="Duncan A.J."/>
            <person name="Challacombe J.F."/>
            <person name="Rainey D."/>
            <person name="Gillaspy A.F."/>
            <person name="Carson M."/>
            <person name="Gipson J."/>
            <person name="Gipson M."/>
            <person name="Bruce D."/>
            <person name="Detter J.C."/>
            <person name="Han C.S."/>
            <person name="Land M."/>
            <person name="Tapia R."/>
            <person name="Thompson L.S."/>
            <person name="Orvis J."/>
            <person name="Zaitshik J."/>
            <person name="Barnes G."/>
            <person name="Brettin T.S."/>
            <person name="Dyer D.W."/>
            <person name="Inzana T.J."/>
        </authorList>
    </citation>
    <scope>NUCLEOTIDE SEQUENCE [LARGE SCALE GENOMIC DNA]</scope>
    <source>
        <strain>2336</strain>
    </source>
</reference>
<sequence>MTTVIYPGTFDPITNGHMDIIQRSAVLFSKVIVAVAKNPSKQPLFNLAERVELVQLSVVHLDNVEVIGFDDLLANVVKARQIDAIIRGVRTTMDFEYESQLAHLNRLLTNGVESLFLPPTEQWSYVSSTIVRDIFLHQGDVSRLVPAAVLRALEKRAK</sequence>
<accession>B0URI7</accession>
<feature type="chain" id="PRO_1000076770" description="Phosphopantetheine adenylyltransferase">
    <location>
        <begin position="1"/>
        <end position="158"/>
    </location>
</feature>
<feature type="binding site" evidence="1">
    <location>
        <begin position="9"/>
        <end position="10"/>
    </location>
    <ligand>
        <name>ATP</name>
        <dbReference type="ChEBI" id="CHEBI:30616"/>
    </ligand>
</feature>
<feature type="binding site" evidence="1">
    <location>
        <position position="9"/>
    </location>
    <ligand>
        <name>substrate</name>
    </ligand>
</feature>
<feature type="binding site" evidence="1">
    <location>
        <position position="17"/>
    </location>
    <ligand>
        <name>ATP</name>
        <dbReference type="ChEBI" id="CHEBI:30616"/>
    </ligand>
</feature>
<feature type="binding site" evidence="1">
    <location>
        <position position="41"/>
    </location>
    <ligand>
        <name>substrate</name>
    </ligand>
</feature>
<feature type="binding site" evidence="1">
    <location>
        <position position="73"/>
    </location>
    <ligand>
        <name>substrate</name>
    </ligand>
</feature>
<feature type="binding site" evidence="1">
    <location>
        <position position="87"/>
    </location>
    <ligand>
        <name>substrate</name>
    </ligand>
</feature>
<feature type="binding site" evidence="1">
    <location>
        <begin position="88"/>
        <end position="90"/>
    </location>
    <ligand>
        <name>ATP</name>
        <dbReference type="ChEBI" id="CHEBI:30616"/>
    </ligand>
</feature>
<feature type="binding site" evidence="1">
    <location>
        <position position="98"/>
    </location>
    <ligand>
        <name>ATP</name>
        <dbReference type="ChEBI" id="CHEBI:30616"/>
    </ligand>
</feature>
<feature type="binding site" evidence="1">
    <location>
        <begin position="123"/>
        <end position="129"/>
    </location>
    <ligand>
        <name>ATP</name>
        <dbReference type="ChEBI" id="CHEBI:30616"/>
    </ligand>
</feature>
<feature type="site" description="Transition state stabilizer" evidence="1">
    <location>
        <position position="17"/>
    </location>
</feature>
<comment type="function">
    <text evidence="1">Reversibly transfers an adenylyl group from ATP to 4'-phosphopantetheine, yielding dephospho-CoA (dPCoA) and pyrophosphate.</text>
</comment>
<comment type="catalytic activity">
    <reaction evidence="1">
        <text>(R)-4'-phosphopantetheine + ATP + H(+) = 3'-dephospho-CoA + diphosphate</text>
        <dbReference type="Rhea" id="RHEA:19801"/>
        <dbReference type="ChEBI" id="CHEBI:15378"/>
        <dbReference type="ChEBI" id="CHEBI:30616"/>
        <dbReference type="ChEBI" id="CHEBI:33019"/>
        <dbReference type="ChEBI" id="CHEBI:57328"/>
        <dbReference type="ChEBI" id="CHEBI:61723"/>
        <dbReference type="EC" id="2.7.7.3"/>
    </reaction>
</comment>
<comment type="cofactor">
    <cofactor evidence="1">
        <name>Mg(2+)</name>
        <dbReference type="ChEBI" id="CHEBI:18420"/>
    </cofactor>
</comment>
<comment type="pathway">
    <text evidence="1">Cofactor biosynthesis; coenzyme A biosynthesis; CoA from (R)-pantothenate: step 4/5.</text>
</comment>
<comment type="subunit">
    <text evidence="1">Homohexamer.</text>
</comment>
<comment type="subcellular location">
    <subcellularLocation>
        <location evidence="1">Cytoplasm</location>
    </subcellularLocation>
</comment>
<comment type="similarity">
    <text evidence="1">Belongs to the bacterial CoaD family.</text>
</comment>
<dbReference type="EC" id="2.7.7.3" evidence="1"/>
<dbReference type="EMBL" id="CP000947">
    <property type="protein sequence ID" value="ACA32066.1"/>
    <property type="molecule type" value="Genomic_DNA"/>
</dbReference>
<dbReference type="RefSeq" id="WP_012341265.1">
    <property type="nucleotide sequence ID" value="NC_010519.1"/>
</dbReference>
<dbReference type="SMR" id="B0URI7"/>
<dbReference type="STRING" id="228400.HSM_0422"/>
<dbReference type="GeneID" id="31486702"/>
<dbReference type="KEGG" id="hsm:HSM_0422"/>
<dbReference type="HOGENOM" id="CLU_100149_0_1_6"/>
<dbReference type="UniPathway" id="UPA00241">
    <property type="reaction ID" value="UER00355"/>
</dbReference>
<dbReference type="GO" id="GO:0005737">
    <property type="term" value="C:cytoplasm"/>
    <property type="evidence" value="ECO:0007669"/>
    <property type="project" value="UniProtKB-SubCell"/>
</dbReference>
<dbReference type="GO" id="GO:0005524">
    <property type="term" value="F:ATP binding"/>
    <property type="evidence" value="ECO:0007669"/>
    <property type="project" value="UniProtKB-KW"/>
</dbReference>
<dbReference type="GO" id="GO:0004595">
    <property type="term" value="F:pantetheine-phosphate adenylyltransferase activity"/>
    <property type="evidence" value="ECO:0007669"/>
    <property type="project" value="UniProtKB-UniRule"/>
</dbReference>
<dbReference type="GO" id="GO:0015937">
    <property type="term" value="P:coenzyme A biosynthetic process"/>
    <property type="evidence" value="ECO:0007669"/>
    <property type="project" value="UniProtKB-UniRule"/>
</dbReference>
<dbReference type="CDD" id="cd02163">
    <property type="entry name" value="PPAT"/>
    <property type="match status" value="1"/>
</dbReference>
<dbReference type="Gene3D" id="3.40.50.620">
    <property type="entry name" value="HUPs"/>
    <property type="match status" value="1"/>
</dbReference>
<dbReference type="HAMAP" id="MF_00151">
    <property type="entry name" value="PPAT_bact"/>
    <property type="match status" value="1"/>
</dbReference>
<dbReference type="InterPro" id="IPR004821">
    <property type="entry name" value="Cyt_trans-like"/>
</dbReference>
<dbReference type="InterPro" id="IPR001980">
    <property type="entry name" value="PPAT"/>
</dbReference>
<dbReference type="InterPro" id="IPR014729">
    <property type="entry name" value="Rossmann-like_a/b/a_fold"/>
</dbReference>
<dbReference type="NCBIfam" id="TIGR01510">
    <property type="entry name" value="coaD_prev_kdtB"/>
    <property type="match status" value="1"/>
</dbReference>
<dbReference type="NCBIfam" id="TIGR00125">
    <property type="entry name" value="cyt_tran_rel"/>
    <property type="match status" value="1"/>
</dbReference>
<dbReference type="PANTHER" id="PTHR21342">
    <property type="entry name" value="PHOSPHOPANTETHEINE ADENYLYLTRANSFERASE"/>
    <property type="match status" value="1"/>
</dbReference>
<dbReference type="PANTHER" id="PTHR21342:SF1">
    <property type="entry name" value="PHOSPHOPANTETHEINE ADENYLYLTRANSFERASE"/>
    <property type="match status" value="1"/>
</dbReference>
<dbReference type="Pfam" id="PF01467">
    <property type="entry name" value="CTP_transf_like"/>
    <property type="match status" value="1"/>
</dbReference>
<dbReference type="PRINTS" id="PR01020">
    <property type="entry name" value="LPSBIOSNTHSS"/>
</dbReference>
<dbReference type="SUPFAM" id="SSF52374">
    <property type="entry name" value="Nucleotidylyl transferase"/>
    <property type="match status" value="1"/>
</dbReference>
<proteinExistence type="inferred from homology"/>
<gene>
    <name evidence="1" type="primary">coaD</name>
    <name type="ordered locus">HSM_0422</name>
</gene>
<protein>
    <recommendedName>
        <fullName evidence="1">Phosphopantetheine adenylyltransferase</fullName>
        <ecNumber evidence="1">2.7.7.3</ecNumber>
    </recommendedName>
    <alternativeName>
        <fullName evidence="1">Dephospho-CoA pyrophosphorylase</fullName>
    </alternativeName>
    <alternativeName>
        <fullName evidence="1">Pantetheine-phosphate adenylyltransferase</fullName>
        <shortName evidence="1">PPAT</shortName>
    </alternativeName>
</protein>